<keyword id="KW-0963">Cytoplasm</keyword>
<keyword id="KW-0444">Lipid biosynthesis</keyword>
<keyword id="KW-0443">Lipid metabolism</keyword>
<keyword id="KW-0479">Metal-binding</keyword>
<keyword id="KW-0520">NAD</keyword>
<keyword id="KW-0521">NADP</keyword>
<keyword id="KW-0560">Oxidoreductase</keyword>
<keyword id="KW-0594">Phospholipid biosynthesis</keyword>
<keyword id="KW-1208">Phospholipid metabolism</keyword>
<keyword id="KW-0862">Zinc</keyword>
<organism>
    <name type="scientific">Pyrococcus horikoshii (strain ATCC 700860 / DSM 12428 / JCM 9974 / NBRC 100139 / OT-3)</name>
    <dbReference type="NCBI Taxonomy" id="70601"/>
    <lineage>
        <taxon>Archaea</taxon>
        <taxon>Methanobacteriati</taxon>
        <taxon>Methanobacteriota</taxon>
        <taxon>Thermococci</taxon>
        <taxon>Thermococcales</taxon>
        <taxon>Thermococcaceae</taxon>
        <taxon>Pyrococcus</taxon>
    </lineage>
</organism>
<comment type="function">
    <text evidence="1">Catalyzes the NAD(P)H-dependent reduction of dihydroxyacetonephosphate (DHAP or glycerone phosphate) to glycerol 1-phosphate (G1P). The G1P thus generated is used as the glycerophosphate backbone of phospholipids in the cellular membranes of Archaea.</text>
</comment>
<comment type="catalytic activity">
    <reaction evidence="1">
        <text>sn-glycerol 1-phosphate + NAD(+) = dihydroxyacetone phosphate + NADH + H(+)</text>
        <dbReference type="Rhea" id="RHEA:21412"/>
        <dbReference type="ChEBI" id="CHEBI:15378"/>
        <dbReference type="ChEBI" id="CHEBI:57540"/>
        <dbReference type="ChEBI" id="CHEBI:57642"/>
        <dbReference type="ChEBI" id="CHEBI:57685"/>
        <dbReference type="ChEBI" id="CHEBI:57945"/>
        <dbReference type="EC" id="1.1.1.261"/>
    </reaction>
</comment>
<comment type="catalytic activity">
    <reaction evidence="1">
        <text>sn-glycerol 1-phosphate + NADP(+) = dihydroxyacetone phosphate + NADPH + H(+)</text>
        <dbReference type="Rhea" id="RHEA:21416"/>
        <dbReference type="ChEBI" id="CHEBI:15378"/>
        <dbReference type="ChEBI" id="CHEBI:57642"/>
        <dbReference type="ChEBI" id="CHEBI:57685"/>
        <dbReference type="ChEBI" id="CHEBI:57783"/>
        <dbReference type="ChEBI" id="CHEBI:58349"/>
        <dbReference type="EC" id="1.1.1.261"/>
    </reaction>
</comment>
<comment type="cofactor">
    <cofactor evidence="1">
        <name>Zn(2+)</name>
        <dbReference type="ChEBI" id="CHEBI:29105"/>
    </cofactor>
    <text evidence="1">Binds 1 zinc ion per subunit.</text>
</comment>
<comment type="pathway">
    <text evidence="1">Membrane lipid metabolism; glycerophospholipid metabolism.</text>
</comment>
<comment type="subcellular location">
    <subcellularLocation>
        <location evidence="1">Cytoplasm</location>
    </subcellularLocation>
</comment>
<comment type="similarity">
    <text evidence="1">Belongs to the glycerol-1-phosphate dehydrogenase family.</text>
</comment>
<comment type="sequence caution" evidence="2">
    <conflict type="erroneous initiation">
        <sequence resource="EMBL-CDS" id="BAA30582"/>
    </conflict>
</comment>
<proteinExistence type="inferred from homology"/>
<gene>
    <name evidence="1" type="primary">egsA</name>
    <name type="ordered locus">PH1475</name>
</gene>
<reference key="1">
    <citation type="journal article" date="1998" name="DNA Res.">
        <title>Complete sequence and gene organization of the genome of a hyper-thermophilic archaebacterium, Pyrococcus horikoshii OT3.</title>
        <authorList>
            <person name="Kawarabayasi Y."/>
            <person name="Sawada M."/>
            <person name="Horikawa H."/>
            <person name="Haikawa Y."/>
            <person name="Hino Y."/>
            <person name="Yamamoto S."/>
            <person name="Sekine M."/>
            <person name="Baba S."/>
            <person name="Kosugi H."/>
            <person name="Hosoyama A."/>
            <person name="Nagai Y."/>
            <person name="Sakai M."/>
            <person name="Ogura K."/>
            <person name="Otsuka R."/>
            <person name="Nakazawa H."/>
            <person name="Takamiya M."/>
            <person name="Ohfuku Y."/>
            <person name="Funahashi T."/>
            <person name="Tanaka T."/>
            <person name="Kudoh Y."/>
            <person name="Yamazaki J."/>
            <person name="Kushida N."/>
            <person name="Oguchi A."/>
            <person name="Aoki K."/>
            <person name="Yoshizawa T."/>
            <person name="Nakamura Y."/>
            <person name="Robb F.T."/>
            <person name="Horikoshi K."/>
            <person name="Masuchi Y."/>
            <person name="Shizuya H."/>
            <person name="Kikuchi H."/>
        </authorList>
    </citation>
    <scope>NUCLEOTIDE SEQUENCE [LARGE SCALE GENOMIC DNA]</scope>
    <source>
        <strain>ATCC 700860 / DSM 12428 / JCM 9974 / NBRC 100139 / OT-3</strain>
    </source>
</reference>
<sequence>MHLMEFPREVILGKNLIQEINNVIKRLKLGSPGLVVYGPITKKIAGSNVEKIVKEEFEVYSITVKEAHINEVERVISKIRDKGIKWAIAVGGGSIIDVTKLASFKMGIPFISFPTTASHDGIASANASIKGLNVKTSIKAKPPIAVIADIDVIKTAPKRYLAAGVGDIVSNITAVRDWKLAHKLKGEYFSEYAASLSLMSAKMVIRDAEIIRLGQDEGIRKVVKALISSGVAMSIAGSSRPASGAEHLFSHALDMLLDKPALHGEQTGIGTIIMAYLHGINWKKIRDTLKIVGAPTTAYELGIDPEIIIEALTIAHTIRPERYTILGKEGITREAAEKAAKITGVI</sequence>
<protein>
    <recommendedName>
        <fullName evidence="1">Glycerol-1-phosphate dehydrogenase [NAD(P)+]</fullName>
        <shortName evidence="1">G1P dehydrogenase</shortName>
        <shortName evidence="1">G1PDH</shortName>
        <ecNumber evidence="1">1.1.1.261</ecNumber>
    </recommendedName>
    <alternativeName>
        <fullName evidence="1">Enantiomeric glycerophosphate synthase</fullName>
    </alternativeName>
    <alternativeName>
        <fullName evidence="1">sn-glycerol-1-phosphate dehydrogenase</fullName>
    </alternativeName>
</protein>
<name>G1PDH_PYRHO</name>
<feature type="chain" id="PRO_0000157350" description="Glycerol-1-phosphate dehydrogenase [NAD(P)+]">
    <location>
        <begin position="1"/>
        <end position="346"/>
    </location>
</feature>
<feature type="binding site" evidence="1">
    <location>
        <begin position="93"/>
        <end position="97"/>
    </location>
    <ligand>
        <name>NAD(+)</name>
        <dbReference type="ChEBI" id="CHEBI:57540"/>
    </ligand>
</feature>
<feature type="binding site" evidence="1">
    <location>
        <begin position="115"/>
        <end position="118"/>
    </location>
    <ligand>
        <name>NAD(+)</name>
        <dbReference type="ChEBI" id="CHEBI:57540"/>
    </ligand>
</feature>
<feature type="binding site" evidence="1">
    <location>
        <position position="120"/>
    </location>
    <ligand>
        <name>substrate</name>
    </ligand>
</feature>
<feature type="binding site" evidence="1">
    <location>
        <position position="124"/>
    </location>
    <ligand>
        <name>NAD(+)</name>
        <dbReference type="ChEBI" id="CHEBI:57540"/>
    </ligand>
</feature>
<feature type="binding site" evidence="1">
    <location>
        <position position="167"/>
    </location>
    <ligand>
        <name>substrate</name>
    </ligand>
</feature>
<feature type="binding site" evidence="1">
    <location>
        <position position="167"/>
    </location>
    <ligand>
        <name>Zn(2+)</name>
        <dbReference type="ChEBI" id="CHEBI:29105"/>
        <note>catalytic</note>
    </ligand>
</feature>
<feature type="binding site" evidence="1">
    <location>
        <position position="247"/>
    </location>
    <ligand>
        <name>Zn(2+)</name>
        <dbReference type="ChEBI" id="CHEBI:29105"/>
        <note>catalytic</note>
    </ligand>
</feature>
<feature type="binding site" evidence="1">
    <location>
        <position position="251"/>
    </location>
    <ligand>
        <name>substrate</name>
    </ligand>
</feature>
<feature type="binding site" evidence="1">
    <location>
        <position position="263"/>
    </location>
    <ligand>
        <name>Zn(2+)</name>
        <dbReference type="ChEBI" id="CHEBI:29105"/>
        <note>catalytic</note>
    </ligand>
</feature>
<evidence type="ECO:0000255" key="1">
    <source>
        <dbReference type="HAMAP-Rule" id="MF_00497"/>
    </source>
</evidence>
<evidence type="ECO:0000305" key="2"/>
<accession>O59144</accession>
<dbReference type="EC" id="1.1.1.261" evidence="1"/>
<dbReference type="EMBL" id="BA000001">
    <property type="protein sequence ID" value="BAA30582.1"/>
    <property type="status" value="ALT_INIT"/>
    <property type="molecule type" value="Genomic_DNA"/>
</dbReference>
<dbReference type="PIR" id="F71022">
    <property type="entry name" value="F71022"/>
</dbReference>
<dbReference type="RefSeq" id="WP_173026598.1">
    <property type="nucleotide sequence ID" value="NC_000961.1"/>
</dbReference>
<dbReference type="SMR" id="O59144"/>
<dbReference type="STRING" id="70601.gene:9378453"/>
<dbReference type="EnsemblBacteria" id="BAA30582">
    <property type="protein sequence ID" value="BAA30582"/>
    <property type="gene ID" value="BAA30582"/>
</dbReference>
<dbReference type="GeneID" id="1443794"/>
<dbReference type="KEGG" id="pho:PH1475"/>
<dbReference type="eggNOG" id="arCOG00982">
    <property type="taxonomic scope" value="Archaea"/>
</dbReference>
<dbReference type="OrthoDB" id="8656at2157"/>
<dbReference type="UniPathway" id="UPA00940"/>
<dbReference type="Proteomes" id="UP000000752">
    <property type="component" value="Chromosome"/>
</dbReference>
<dbReference type="GO" id="GO:0005737">
    <property type="term" value="C:cytoplasm"/>
    <property type="evidence" value="ECO:0007669"/>
    <property type="project" value="UniProtKB-SubCell"/>
</dbReference>
<dbReference type="GO" id="GO:0106357">
    <property type="term" value="F:glycerol-1-phosphate dehydrogenase (NAD+) activity"/>
    <property type="evidence" value="ECO:0007669"/>
    <property type="project" value="RHEA"/>
</dbReference>
<dbReference type="GO" id="GO:0106358">
    <property type="term" value="F:glycerol-1-phosphate dehydrogenase (NADP+) activity"/>
    <property type="evidence" value="ECO:0007669"/>
    <property type="project" value="RHEA"/>
</dbReference>
<dbReference type="GO" id="GO:0046872">
    <property type="term" value="F:metal ion binding"/>
    <property type="evidence" value="ECO:0007669"/>
    <property type="project" value="UniProtKB-KW"/>
</dbReference>
<dbReference type="GO" id="GO:0006650">
    <property type="term" value="P:glycerophospholipid metabolic process"/>
    <property type="evidence" value="ECO:0007669"/>
    <property type="project" value="UniProtKB-UniRule"/>
</dbReference>
<dbReference type="GO" id="GO:0008654">
    <property type="term" value="P:phospholipid biosynthetic process"/>
    <property type="evidence" value="ECO:0007669"/>
    <property type="project" value="UniProtKB-KW"/>
</dbReference>
<dbReference type="CDD" id="cd08173">
    <property type="entry name" value="Gro1PDH"/>
    <property type="match status" value="1"/>
</dbReference>
<dbReference type="Gene3D" id="3.40.50.1970">
    <property type="match status" value="1"/>
</dbReference>
<dbReference type="Gene3D" id="1.20.1090.10">
    <property type="entry name" value="Dehydroquinate synthase-like - alpha domain"/>
    <property type="match status" value="1"/>
</dbReference>
<dbReference type="HAMAP" id="MF_00497_A">
    <property type="entry name" value="G1P_dehydrogenase_A"/>
    <property type="match status" value="1"/>
</dbReference>
<dbReference type="InterPro" id="IPR023002">
    <property type="entry name" value="G1P_dehydrogenase_arc"/>
</dbReference>
<dbReference type="InterPro" id="IPR032837">
    <property type="entry name" value="G1PDH"/>
</dbReference>
<dbReference type="InterPro" id="IPR016205">
    <property type="entry name" value="Glycerol_DH"/>
</dbReference>
<dbReference type="NCBIfam" id="NF002022">
    <property type="entry name" value="PRK00843.1"/>
    <property type="match status" value="1"/>
</dbReference>
<dbReference type="PANTHER" id="PTHR43616">
    <property type="entry name" value="GLYCEROL DEHYDROGENASE"/>
    <property type="match status" value="1"/>
</dbReference>
<dbReference type="PANTHER" id="PTHR43616:SF5">
    <property type="entry name" value="GLYCEROL DEHYDROGENASE 1"/>
    <property type="match status" value="1"/>
</dbReference>
<dbReference type="Pfam" id="PF13685">
    <property type="entry name" value="Fe-ADH_2"/>
    <property type="match status" value="1"/>
</dbReference>
<dbReference type="PIRSF" id="PIRSF000112">
    <property type="entry name" value="Glycerol_dehydrogenase"/>
    <property type="match status" value="1"/>
</dbReference>
<dbReference type="SUPFAM" id="SSF56796">
    <property type="entry name" value="Dehydroquinate synthase-like"/>
    <property type="match status" value="1"/>
</dbReference>